<name>NU6C_MANES</name>
<sequence length="176" mass="19208">MDLPGLIHDFLLVFLGLGLILGGLGVVLLTNPIYSAFSLGLVLVCISLFYILSNSHFVAAAQLLIYVGAINVLIIFAVMFMNGSEYYKDFNLWTVGSGVTSLVCTSIFVSLITIIPDTSWYGIIWTTKTNQIIEQDLISNGQQIGIHLSTDFFLPFEFISIILLVALIGAIAVARQ</sequence>
<organism>
    <name type="scientific">Manihot esculenta</name>
    <name type="common">Cassava</name>
    <name type="synonym">Jatropha manihot</name>
    <dbReference type="NCBI Taxonomy" id="3983"/>
    <lineage>
        <taxon>Eukaryota</taxon>
        <taxon>Viridiplantae</taxon>
        <taxon>Streptophyta</taxon>
        <taxon>Embryophyta</taxon>
        <taxon>Tracheophyta</taxon>
        <taxon>Spermatophyta</taxon>
        <taxon>Magnoliopsida</taxon>
        <taxon>eudicotyledons</taxon>
        <taxon>Gunneridae</taxon>
        <taxon>Pentapetalae</taxon>
        <taxon>rosids</taxon>
        <taxon>fabids</taxon>
        <taxon>Malpighiales</taxon>
        <taxon>Euphorbiaceae</taxon>
        <taxon>Crotonoideae</taxon>
        <taxon>Manihoteae</taxon>
        <taxon>Manihot</taxon>
    </lineage>
</organism>
<gene>
    <name type="primary">ndhG</name>
</gene>
<geneLocation type="chloroplast"/>
<evidence type="ECO:0000250" key="1"/>
<evidence type="ECO:0000255" key="2"/>
<evidence type="ECO:0000305" key="3"/>
<dbReference type="EC" id="7.1.1.-"/>
<dbReference type="EMBL" id="EU117376">
    <property type="protein sequence ID" value="ABV66206.1"/>
    <property type="molecule type" value="Genomic_DNA"/>
</dbReference>
<dbReference type="RefSeq" id="YP_001718489.1">
    <property type="nucleotide sequence ID" value="NC_010433.1"/>
</dbReference>
<dbReference type="SMR" id="B1NWK2"/>
<dbReference type="GeneID" id="6000007"/>
<dbReference type="KEGG" id="mesc:6000007"/>
<dbReference type="OrthoDB" id="1893972at2759"/>
<dbReference type="GO" id="GO:0009535">
    <property type="term" value="C:chloroplast thylakoid membrane"/>
    <property type="evidence" value="ECO:0007669"/>
    <property type="project" value="UniProtKB-SubCell"/>
</dbReference>
<dbReference type="GO" id="GO:0008137">
    <property type="term" value="F:NADH dehydrogenase (ubiquinone) activity"/>
    <property type="evidence" value="ECO:0007669"/>
    <property type="project" value="InterPro"/>
</dbReference>
<dbReference type="GO" id="GO:0048038">
    <property type="term" value="F:quinone binding"/>
    <property type="evidence" value="ECO:0007669"/>
    <property type="project" value="UniProtKB-KW"/>
</dbReference>
<dbReference type="FunFam" id="1.20.120.1200:FF:000002">
    <property type="entry name" value="NAD(P)H-quinone oxidoreductase subunit 6, chloroplastic"/>
    <property type="match status" value="1"/>
</dbReference>
<dbReference type="Gene3D" id="1.20.120.1200">
    <property type="entry name" value="NADH-ubiquinone/plastoquinone oxidoreductase chain 6, subunit NuoJ"/>
    <property type="match status" value="1"/>
</dbReference>
<dbReference type="InterPro" id="IPR050290">
    <property type="entry name" value="NAD(P)H-Q_Oxidoreduct_6"/>
</dbReference>
<dbReference type="InterPro" id="IPR001457">
    <property type="entry name" value="NADH_UbQ/plastoQ_OxRdtase_su6"/>
</dbReference>
<dbReference type="InterPro" id="IPR042106">
    <property type="entry name" value="Nuo/plastoQ_OxRdtase_6_NuoJ"/>
</dbReference>
<dbReference type="PANTHER" id="PTHR48479">
    <property type="entry name" value="NAD(P)H-QUINONE OXIDOREDUCTASE SUBUNIT 6, CHLOROPLASTIC"/>
    <property type="match status" value="1"/>
</dbReference>
<dbReference type="PANTHER" id="PTHR48479:SF1">
    <property type="entry name" value="NAD(P)H-QUINONE OXIDOREDUCTASE SUBUNIT 6, CHLOROPLASTIC"/>
    <property type="match status" value="1"/>
</dbReference>
<dbReference type="Pfam" id="PF00499">
    <property type="entry name" value="Oxidored_q3"/>
    <property type="match status" value="1"/>
</dbReference>
<feature type="chain" id="PRO_0000360268" description="NAD(P)H-quinone oxidoreductase subunit 6, chloroplastic">
    <location>
        <begin position="1"/>
        <end position="176"/>
    </location>
</feature>
<feature type="transmembrane region" description="Helical" evidence="2">
    <location>
        <begin position="10"/>
        <end position="30"/>
    </location>
</feature>
<feature type="transmembrane region" description="Helical" evidence="2">
    <location>
        <begin position="32"/>
        <end position="52"/>
    </location>
</feature>
<feature type="transmembrane region" description="Helical" evidence="2">
    <location>
        <begin position="61"/>
        <end position="81"/>
    </location>
</feature>
<feature type="transmembrane region" description="Helical" evidence="2">
    <location>
        <begin position="95"/>
        <end position="115"/>
    </location>
</feature>
<feature type="transmembrane region" description="Helical" evidence="2">
    <location>
        <begin position="152"/>
        <end position="172"/>
    </location>
</feature>
<reference key="1">
    <citation type="journal article" date="2008" name="Theor. Appl. Genet.">
        <title>The complete nucleotide sequence of the cassava (Manihot esculenta) chloroplast genome and the evolution of atpF in Malpighiales: RNA editing and multiple losses of a group II intron.</title>
        <authorList>
            <person name="Daniell H."/>
            <person name="Wurdack K.J."/>
            <person name="Kanagaraj A."/>
            <person name="Lee S.-B."/>
            <person name="Saski C."/>
            <person name="Jansen R.K."/>
        </authorList>
    </citation>
    <scope>NUCLEOTIDE SEQUENCE [LARGE SCALE GENOMIC DNA]</scope>
    <source>
        <strain>cv. TME3</strain>
    </source>
</reference>
<keyword id="KW-0150">Chloroplast</keyword>
<keyword id="KW-0472">Membrane</keyword>
<keyword id="KW-0520">NAD</keyword>
<keyword id="KW-0521">NADP</keyword>
<keyword id="KW-0934">Plastid</keyword>
<keyword id="KW-0618">Plastoquinone</keyword>
<keyword id="KW-0874">Quinone</keyword>
<keyword id="KW-0793">Thylakoid</keyword>
<keyword id="KW-1278">Translocase</keyword>
<keyword id="KW-0812">Transmembrane</keyword>
<keyword id="KW-1133">Transmembrane helix</keyword>
<keyword id="KW-0813">Transport</keyword>
<protein>
    <recommendedName>
        <fullName>NAD(P)H-quinone oxidoreductase subunit 6, chloroplastic</fullName>
        <ecNumber>7.1.1.-</ecNumber>
    </recommendedName>
    <alternativeName>
        <fullName>NAD(P)H dehydrogenase subunit 6</fullName>
    </alternativeName>
    <alternativeName>
        <fullName>NADH-plastoquinone oxidoreductase subunit 6</fullName>
    </alternativeName>
</protein>
<accession>B1NWK2</accession>
<comment type="function">
    <text evidence="1">NDH shuttles electrons from NAD(P)H:plastoquinone, via FMN and iron-sulfur (Fe-S) centers, to quinones in the photosynthetic chain and possibly in a chloroplast respiratory chain. The immediate electron acceptor for the enzyme in this species is believed to be plastoquinone. Couples the redox reaction to proton translocation, and thus conserves the redox energy in a proton gradient (By similarity).</text>
</comment>
<comment type="catalytic activity">
    <reaction>
        <text>a plastoquinone + NADH + (n+1) H(+)(in) = a plastoquinol + NAD(+) + n H(+)(out)</text>
        <dbReference type="Rhea" id="RHEA:42608"/>
        <dbReference type="Rhea" id="RHEA-COMP:9561"/>
        <dbReference type="Rhea" id="RHEA-COMP:9562"/>
        <dbReference type="ChEBI" id="CHEBI:15378"/>
        <dbReference type="ChEBI" id="CHEBI:17757"/>
        <dbReference type="ChEBI" id="CHEBI:57540"/>
        <dbReference type="ChEBI" id="CHEBI:57945"/>
        <dbReference type="ChEBI" id="CHEBI:62192"/>
    </reaction>
</comment>
<comment type="catalytic activity">
    <reaction>
        <text>a plastoquinone + NADPH + (n+1) H(+)(in) = a plastoquinol + NADP(+) + n H(+)(out)</text>
        <dbReference type="Rhea" id="RHEA:42612"/>
        <dbReference type="Rhea" id="RHEA-COMP:9561"/>
        <dbReference type="Rhea" id="RHEA-COMP:9562"/>
        <dbReference type="ChEBI" id="CHEBI:15378"/>
        <dbReference type="ChEBI" id="CHEBI:17757"/>
        <dbReference type="ChEBI" id="CHEBI:57783"/>
        <dbReference type="ChEBI" id="CHEBI:58349"/>
        <dbReference type="ChEBI" id="CHEBI:62192"/>
    </reaction>
</comment>
<comment type="subunit">
    <text evidence="1">NDH is composed of at least 16 different subunits, 5 of which are encoded in the nucleus.</text>
</comment>
<comment type="subcellular location">
    <subcellularLocation>
        <location evidence="1">Plastid</location>
        <location evidence="1">Chloroplast thylakoid membrane</location>
        <topology evidence="1">Multi-pass membrane protein</topology>
    </subcellularLocation>
</comment>
<comment type="similarity">
    <text evidence="3">Belongs to the complex I subunit 6 family.</text>
</comment>
<proteinExistence type="inferred from homology"/>